<accession>B2HSZ4</accession>
<protein>
    <recommendedName>
        <fullName evidence="1">Urease accessory protein UreG</fullName>
    </recommendedName>
</protein>
<gene>
    <name evidence="1" type="primary">ureG</name>
    <name type="ordered locus">MMAR_2726</name>
</gene>
<sequence>MAKHSHDHTHDHHDRPRRVRKPGEPLRIGVGGPVGSGKTALVAAICRQLRDELSLAVLTNDIYTTEDADFLRKHAVLPDSRITAVQTGGCPHTAIRDDITANLDAIDDLIAAHDALDLILVESGGDNLTATFSSGLVDVQIFVIDVAGGDKVPRKGGPGVTFSDLLVVNKTDLAPLVGADLKVMARDAEAVRDGRPTVLQSLTEDPAATKVLDWVRSQLAAAG</sequence>
<proteinExistence type="inferred from homology"/>
<dbReference type="EMBL" id="CP000854">
    <property type="protein sequence ID" value="ACC41168.1"/>
    <property type="molecule type" value="Genomic_DNA"/>
</dbReference>
<dbReference type="RefSeq" id="WP_012394438.1">
    <property type="nucleotide sequence ID" value="NC_010612.1"/>
</dbReference>
<dbReference type="SMR" id="B2HSZ4"/>
<dbReference type="STRING" id="216594.MMAR_2726"/>
<dbReference type="GeneID" id="93437144"/>
<dbReference type="KEGG" id="mmi:MMAR_2726"/>
<dbReference type="eggNOG" id="COG0378">
    <property type="taxonomic scope" value="Bacteria"/>
</dbReference>
<dbReference type="HOGENOM" id="CLU_072144_1_0_11"/>
<dbReference type="OrthoDB" id="9802035at2"/>
<dbReference type="Proteomes" id="UP000001190">
    <property type="component" value="Chromosome"/>
</dbReference>
<dbReference type="GO" id="GO:0005737">
    <property type="term" value="C:cytoplasm"/>
    <property type="evidence" value="ECO:0007669"/>
    <property type="project" value="UniProtKB-SubCell"/>
</dbReference>
<dbReference type="GO" id="GO:0005525">
    <property type="term" value="F:GTP binding"/>
    <property type="evidence" value="ECO:0007669"/>
    <property type="project" value="UniProtKB-KW"/>
</dbReference>
<dbReference type="GO" id="GO:0003924">
    <property type="term" value="F:GTPase activity"/>
    <property type="evidence" value="ECO:0007669"/>
    <property type="project" value="InterPro"/>
</dbReference>
<dbReference type="GO" id="GO:0016151">
    <property type="term" value="F:nickel cation binding"/>
    <property type="evidence" value="ECO:0007669"/>
    <property type="project" value="UniProtKB-UniRule"/>
</dbReference>
<dbReference type="GO" id="GO:0043419">
    <property type="term" value="P:urea catabolic process"/>
    <property type="evidence" value="ECO:0007669"/>
    <property type="project" value="InterPro"/>
</dbReference>
<dbReference type="CDD" id="cd05540">
    <property type="entry name" value="UreG"/>
    <property type="match status" value="1"/>
</dbReference>
<dbReference type="FunFam" id="3.40.50.300:FF:000208">
    <property type="entry name" value="Urease accessory protein UreG"/>
    <property type="match status" value="1"/>
</dbReference>
<dbReference type="Gene3D" id="3.40.50.300">
    <property type="entry name" value="P-loop containing nucleotide triphosphate hydrolases"/>
    <property type="match status" value="1"/>
</dbReference>
<dbReference type="HAMAP" id="MF_01389">
    <property type="entry name" value="UreG"/>
    <property type="match status" value="1"/>
</dbReference>
<dbReference type="InterPro" id="IPR003495">
    <property type="entry name" value="CobW/HypB/UreG_nucleotide-bd"/>
</dbReference>
<dbReference type="InterPro" id="IPR027417">
    <property type="entry name" value="P-loop_NTPase"/>
</dbReference>
<dbReference type="InterPro" id="IPR004400">
    <property type="entry name" value="UreG"/>
</dbReference>
<dbReference type="NCBIfam" id="TIGR00101">
    <property type="entry name" value="ureG"/>
    <property type="match status" value="1"/>
</dbReference>
<dbReference type="PANTHER" id="PTHR31715">
    <property type="entry name" value="UREASE ACCESSORY PROTEIN G"/>
    <property type="match status" value="1"/>
</dbReference>
<dbReference type="PANTHER" id="PTHR31715:SF0">
    <property type="entry name" value="UREASE ACCESSORY PROTEIN G"/>
    <property type="match status" value="1"/>
</dbReference>
<dbReference type="Pfam" id="PF02492">
    <property type="entry name" value="cobW"/>
    <property type="match status" value="1"/>
</dbReference>
<dbReference type="PIRSF" id="PIRSF005624">
    <property type="entry name" value="Ni-bind_GTPase"/>
    <property type="match status" value="1"/>
</dbReference>
<dbReference type="SUPFAM" id="SSF52540">
    <property type="entry name" value="P-loop containing nucleoside triphosphate hydrolases"/>
    <property type="match status" value="1"/>
</dbReference>
<evidence type="ECO:0000255" key="1">
    <source>
        <dbReference type="HAMAP-Rule" id="MF_01389"/>
    </source>
</evidence>
<evidence type="ECO:0000256" key="2">
    <source>
        <dbReference type="SAM" id="MobiDB-lite"/>
    </source>
</evidence>
<name>UREG_MYCMM</name>
<reference key="1">
    <citation type="journal article" date="2008" name="Genome Res.">
        <title>Insights from the complete genome sequence of Mycobacterium marinum on the evolution of Mycobacterium tuberculosis.</title>
        <authorList>
            <person name="Stinear T.P."/>
            <person name="Seemann T."/>
            <person name="Harrison P.F."/>
            <person name="Jenkin G.A."/>
            <person name="Davies J.K."/>
            <person name="Johnson P.D."/>
            <person name="Abdellah Z."/>
            <person name="Arrowsmith C."/>
            <person name="Chillingworth T."/>
            <person name="Churcher C."/>
            <person name="Clarke K."/>
            <person name="Cronin A."/>
            <person name="Davis P."/>
            <person name="Goodhead I."/>
            <person name="Holroyd N."/>
            <person name="Jagels K."/>
            <person name="Lord A."/>
            <person name="Moule S."/>
            <person name="Mungall K."/>
            <person name="Norbertczak H."/>
            <person name="Quail M.A."/>
            <person name="Rabbinowitsch E."/>
            <person name="Walker D."/>
            <person name="White B."/>
            <person name="Whitehead S."/>
            <person name="Small P.L."/>
            <person name="Brosch R."/>
            <person name="Ramakrishnan L."/>
            <person name="Fischbach M.A."/>
            <person name="Parkhill J."/>
            <person name="Cole S.T."/>
        </authorList>
    </citation>
    <scope>NUCLEOTIDE SEQUENCE [LARGE SCALE GENOMIC DNA]</scope>
    <source>
        <strain>ATCC BAA-535 / M</strain>
    </source>
</reference>
<feature type="chain" id="PRO_1000145189" description="Urease accessory protein UreG">
    <location>
        <begin position="1"/>
        <end position="223"/>
    </location>
</feature>
<feature type="region of interest" description="Disordered" evidence="2">
    <location>
        <begin position="1"/>
        <end position="31"/>
    </location>
</feature>
<feature type="binding site" evidence="1">
    <location>
        <begin position="32"/>
        <end position="39"/>
    </location>
    <ligand>
        <name>GTP</name>
        <dbReference type="ChEBI" id="CHEBI:37565"/>
    </ligand>
</feature>
<comment type="function">
    <text evidence="1">Facilitates the functional incorporation of the urease nickel metallocenter. This process requires GTP hydrolysis, probably effectuated by UreG.</text>
</comment>
<comment type="subunit">
    <text evidence="1">Homodimer. UreD, UreF and UreG form a complex that acts as a GTP-hydrolysis-dependent molecular chaperone, activating the urease apoprotein by helping to assemble the nickel containing metallocenter of UreC. The UreE protein probably delivers the nickel.</text>
</comment>
<comment type="subcellular location">
    <subcellularLocation>
        <location evidence="1">Cytoplasm</location>
    </subcellularLocation>
</comment>
<comment type="similarity">
    <text evidence="1">Belongs to the SIMIBI class G3E GTPase family. UreG subfamily.</text>
</comment>
<organism>
    <name type="scientific">Mycobacterium marinum (strain ATCC BAA-535 / M)</name>
    <dbReference type="NCBI Taxonomy" id="216594"/>
    <lineage>
        <taxon>Bacteria</taxon>
        <taxon>Bacillati</taxon>
        <taxon>Actinomycetota</taxon>
        <taxon>Actinomycetes</taxon>
        <taxon>Mycobacteriales</taxon>
        <taxon>Mycobacteriaceae</taxon>
        <taxon>Mycobacterium</taxon>
        <taxon>Mycobacterium ulcerans group</taxon>
    </lineage>
</organism>
<keyword id="KW-0143">Chaperone</keyword>
<keyword id="KW-0963">Cytoplasm</keyword>
<keyword id="KW-0342">GTP-binding</keyword>
<keyword id="KW-0996">Nickel insertion</keyword>
<keyword id="KW-0547">Nucleotide-binding</keyword>
<keyword id="KW-1185">Reference proteome</keyword>